<proteinExistence type="evidence at protein level"/>
<name>PTN21_HUMAN</name>
<keyword id="KW-0002">3D-structure</keyword>
<keyword id="KW-0963">Cytoplasm</keyword>
<keyword id="KW-0206">Cytoskeleton</keyword>
<keyword id="KW-0378">Hydrolase</keyword>
<keyword id="KW-0597">Phosphoprotein</keyword>
<keyword id="KW-0904">Protein phosphatase</keyword>
<keyword id="KW-1267">Proteomics identification</keyword>
<keyword id="KW-1185">Reference proteome</keyword>
<gene>
    <name type="primary">PTPN21</name>
    <name type="synonym">PTPD1</name>
</gene>
<protein>
    <recommendedName>
        <fullName>Tyrosine-protein phosphatase non-receptor type 21</fullName>
        <ecNumber>3.1.3.48</ecNumber>
    </recommendedName>
    <alternativeName>
        <fullName>Protein-tyrosine phosphatase D1</fullName>
    </alternativeName>
</protein>
<comment type="catalytic activity">
    <reaction evidence="7">
        <text>O-phospho-L-tyrosyl-[protein] + H2O = L-tyrosyl-[protein] + phosphate</text>
        <dbReference type="Rhea" id="RHEA:10684"/>
        <dbReference type="Rhea" id="RHEA-COMP:10136"/>
        <dbReference type="Rhea" id="RHEA-COMP:20101"/>
        <dbReference type="ChEBI" id="CHEBI:15377"/>
        <dbReference type="ChEBI" id="CHEBI:43474"/>
        <dbReference type="ChEBI" id="CHEBI:46858"/>
        <dbReference type="ChEBI" id="CHEBI:61978"/>
        <dbReference type="EC" id="3.1.3.48"/>
    </reaction>
</comment>
<comment type="interaction">
    <interactant intactId="EBI-2860264">
        <id>Q16825</id>
    </interactant>
    <interactant intactId="EBI-745689">
        <id>Q7L5A3</id>
        <label>ATOSB</label>
    </interactant>
    <organismsDiffer>false</organismsDiffer>
    <experiments>3</experiments>
</comment>
<comment type="interaction">
    <interactant intactId="EBI-2860264">
        <id>Q16825</id>
    </interactant>
    <interactant intactId="EBI-747185">
        <id>O95817</id>
        <label>BAG3</label>
    </interactant>
    <organismsDiffer>false</organismsDiffer>
    <experiments>3</experiments>
</comment>
<comment type="interaction">
    <interactant intactId="EBI-2860264">
        <id>Q16825</id>
    </interactant>
    <interactant intactId="EBI-696657">
        <id>P51813</id>
        <label>BMX</label>
    </interactant>
    <organismsDiffer>false</organismsDiffer>
    <experiments>3</experiments>
</comment>
<comment type="interaction">
    <interactant intactId="EBI-2860264">
        <id>Q16825</id>
    </interactant>
    <interactant intactId="EBI-744545">
        <id>Q8NEC5</id>
        <label>CATSPER1</label>
    </interactant>
    <organismsDiffer>false</organismsDiffer>
    <experiments>3</experiments>
</comment>
<comment type="interaction">
    <interactant intactId="EBI-2860264">
        <id>Q16825</id>
    </interactant>
    <interactant intactId="EBI-373289">
        <id>Q9HCG8</id>
        <label>CWC22</label>
    </interactant>
    <organismsDiffer>false</organismsDiffer>
    <experiments>3</experiments>
</comment>
<comment type="interaction">
    <interactant intactId="EBI-2860264">
        <id>Q16825</id>
    </interactant>
    <interactant intactId="EBI-2510157">
        <id>Q96EF6</id>
        <label>FBXO17</label>
    </interactant>
    <organismsDiffer>false</organismsDiffer>
    <experiments>3</experiments>
</comment>
<comment type="interaction">
    <interactant intactId="EBI-2860264">
        <id>Q16825</id>
    </interactant>
    <interactant intactId="EBI-618309">
        <id>Q08379</id>
        <label>GOLGA2</label>
    </interactant>
    <organismsDiffer>false</organismsDiffer>
    <experiments>3</experiments>
</comment>
<comment type="interaction">
    <interactant intactId="EBI-2860264">
        <id>Q16825</id>
    </interactant>
    <interactant intactId="EBI-746778">
        <id>Q96A72</id>
        <label>MAGOHB</label>
    </interactant>
    <organismsDiffer>false</organismsDiffer>
    <experiments>3</experiments>
</comment>
<comment type="interaction">
    <interactant intactId="EBI-2860264">
        <id>Q16825</id>
    </interactant>
    <interactant intactId="EBI-9679267">
        <id>Q70IA8</id>
        <label>MOB3C</label>
    </interactant>
    <organismsDiffer>false</organismsDiffer>
    <experiments>3</experiments>
</comment>
<comment type="interaction">
    <interactant intactId="EBI-2860264">
        <id>Q16825</id>
    </interactant>
    <interactant intactId="EBI-11750983">
        <id>Q9HC98-4</id>
        <label>NEK6</label>
    </interactant>
    <organismsDiffer>false</organismsDiffer>
    <experiments>3</experiments>
</comment>
<comment type="interaction">
    <interactant intactId="EBI-2860264">
        <id>Q16825</id>
    </interactant>
    <interactant intactId="EBI-12028784">
        <id>Q6X4W1-2</id>
        <label>NSMF</label>
    </interactant>
    <organismsDiffer>false</organismsDiffer>
    <experiments>3</experiments>
</comment>
<comment type="interaction">
    <interactant intactId="EBI-2860264">
        <id>Q16825</id>
    </interactant>
    <interactant intactId="EBI-741896">
        <id>Q9P286</id>
        <label>PAK5</label>
    </interactant>
    <organismsDiffer>false</organismsDiffer>
    <experiments>3</experiments>
</comment>
<comment type="interaction">
    <interactant intactId="EBI-2860264">
        <id>Q16825</id>
    </interactant>
    <interactant intactId="EBI-10693102">
        <id>Q9NPB6-2</id>
        <label>PARD6A</label>
    </interactant>
    <organismsDiffer>false</organismsDiffer>
    <experiments>3</experiments>
</comment>
<comment type="interaction">
    <interactant intactId="EBI-2860264">
        <id>Q16825</id>
    </interactant>
    <interactant intactId="EBI-14066006">
        <id>Q4G0R1</id>
        <label>PIBF1</label>
    </interactant>
    <organismsDiffer>false</organismsDiffer>
    <experiments>3</experiments>
</comment>
<comment type="interaction">
    <interactant intactId="EBI-2860264">
        <id>Q16825</id>
    </interactant>
    <interactant intactId="EBI-347462">
        <id>P47897</id>
        <label>QARS1</label>
    </interactant>
    <organismsDiffer>false</organismsDiffer>
    <experiments>3</experiments>
</comment>
<comment type="interaction">
    <interactant intactId="EBI-2860264">
        <id>Q16825</id>
    </interactant>
    <interactant intactId="EBI-740818">
        <id>Q9Y272</id>
        <label>RASD1</label>
    </interactant>
    <organismsDiffer>false</organismsDiffer>
    <experiments>3</experiments>
</comment>
<comment type="interaction">
    <interactant intactId="EBI-2860264">
        <id>Q16825</id>
    </interactant>
    <interactant intactId="EBI-298169">
        <id>Q96RF0</id>
        <label>SNX18</label>
    </interactant>
    <organismsDiffer>false</organismsDiffer>
    <experiments>3</experiments>
</comment>
<comment type="interaction">
    <interactant intactId="EBI-2860264">
        <id>Q16825</id>
    </interactant>
    <interactant intactId="EBI-621482">
        <id>P12931</id>
        <label>SRC</label>
    </interactant>
    <organismsDiffer>false</organismsDiffer>
    <experiments>2</experiments>
</comment>
<comment type="interaction">
    <interactant intactId="EBI-2860264">
        <id>Q16825</id>
    </interactant>
    <interactant intactId="EBI-2820256">
        <id>Q14142</id>
        <label>TRIM14</label>
    </interactant>
    <organismsDiffer>false</organismsDiffer>
    <experiments>3</experiments>
</comment>
<comment type="interaction">
    <interactant intactId="EBI-2860264">
        <id>Q16825</id>
    </interactant>
    <interactant intactId="EBI-1380492">
        <id>Q8TF42</id>
        <label>UBASH3B</label>
    </interactant>
    <organismsDiffer>false</organismsDiffer>
    <experiments>3</experiments>
</comment>
<comment type="interaction">
    <interactant intactId="EBI-2860264">
        <id>Q16825</id>
    </interactant>
    <interactant intactId="EBI-7207091">
        <id>O14972</id>
        <label>VPS26C</label>
    </interactant>
    <organismsDiffer>false</organismsDiffer>
    <experiments>3</experiments>
</comment>
<comment type="interaction">
    <interactant intactId="EBI-2860264">
        <id>Q16825</id>
    </interactant>
    <interactant intactId="EBI-10486136">
        <id>Q6ZNH5</id>
        <label>ZNF497</label>
    </interactant>
    <organismsDiffer>false</organismsDiffer>
    <experiments>3</experiments>
</comment>
<comment type="interaction">
    <interactant intactId="EBI-2860264">
        <id>Q16825</id>
    </interactant>
    <interactant intactId="EBI-9117988">
        <id>O08715-5</id>
        <label>Akap1</label>
    </interactant>
    <organismsDiffer>true</organismsDiffer>
    <experiments>2</experiments>
</comment>
<comment type="subcellular location">
    <subcellularLocation>
        <location evidence="1">Cytoplasm</location>
        <location evidence="1">Cytoskeleton</location>
    </subcellularLocation>
</comment>
<comment type="similarity">
    <text evidence="10">Belongs to the protein-tyrosine phosphatase family. Non-receptor class subfamily.</text>
</comment>
<comment type="online information" name="Atlas of Genetics and Cytogenetics in Oncology and Haematology">
    <link uri="https://atlasgeneticsoncology.org/gene/41916/PTPN21"/>
</comment>
<feature type="chain" id="PRO_0000219439" description="Tyrosine-protein phosphatase non-receptor type 21">
    <location>
        <begin position="1"/>
        <end position="1174"/>
    </location>
</feature>
<feature type="domain" description="FERM" evidence="5">
    <location>
        <begin position="23"/>
        <end position="308"/>
    </location>
</feature>
<feature type="domain" description="Tyrosine-protein phosphatase" evidence="6">
    <location>
        <begin position="896"/>
        <end position="1167"/>
    </location>
</feature>
<feature type="region of interest" description="Disordered" evidence="8">
    <location>
        <begin position="396"/>
        <end position="445"/>
    </location>
</feature>
<feature type="region of interest" description="Disordered" evidence="8">
    <location>
        <begin position="673"/>
        <end position="692"/>
    </location>
</feature>
<feature type="region of interest" description="Disordered" evidence="8">
    <location>
        <begin position="711"/>
        <end position="745"/>
    </location>
</feature>
<feature type="region of interest" description="Disordered" evidence="8">
    <location>
        <begin position="769"/>
        <end position="806"/>
    </location>
</feature>
<feature type="compositionally biased region" description="Polar residues" evidence="8">
    <location>
        <begin position="396"/>
        <end position="423"/>
    </location>
</feature>
<feature type="compositionally biased region" description="Basic and acidic residues" evidence="8">
    <location>
        <begin position="681"/>
        <end position="692"/>
    </location>
</feature>
<feature type="compositionally biased region" description="Acidic residues" evidence="8">
    <location>
        <begin position="712"/>
        <end position="722"/>
    </location>
</feature>
<feature type="compositionally biased region" description="Polar residues" evidence="8">
    <location>
        <begin position="796"/>
        <end position="805"/>
    </location>
</feature>
<feature type="active site" description="Phosphocysteine intermediate" evidence="6 7">
    <location>
        <position position="1108"/>
    </location>
</feature>
<feature type="binding site" evidence="4">
    <location>
        <position position="1067"/>
    </location>
    <ligand>
        <name>substrate</name>
    </ligand>
</feature>
<feature type="binding site" evidence="1">
    <location>
        <begin position="1108"/>
        <end position="1114"/>
    </location>
    <ligand>
        <name>substrate</name>
    </ligand>
</feature>
<feature type="binding site" evidence="1">
    <location>
        <position position="1152"/>
    </location>
    <ligand>
        <name>substrate</name>
    </ligand>
</feature>
<feature type="modified residue" description="Phosphoserine" evidence="2">
    <location>
        <position position="577"/>
    </location>
</feature>
<feature type="modified residue" description="Phosphoserine" evidence="2">
    <location>
        <position position="589"/>
    </location>
</feature>
<feature type="modified residue" description="Phosphoserine" evidence="2">
    <location>
        <position position="590"/>
    </location>
</feature>
<feature type="modified residue" description="Phosphoserine" evidence="11">
    <location>
        <position position="637"/>
    </location>
</feature>
<feature type="modified residue" description="Phosphoserine" evidence="2">
    <location>
        <position position="673"/>
    </location>
</feature>
<feature type="modified residue" description="Phosphoserine" evidence="3">
    <location>
        <position position="710"/>
    </location>
</feature>
<feature type="modified residue" description="Phosphoserine" evidence="3">
    <location>
        <position position="711"/>
    </location>
</feature>
<feature type="modified residue" description="Phosphoserine" evidence="2">
    <location>
        <position position="797"/>
    </location>
</feature>
<feature type="modified residue" description="Phosphoserine" evidence="2">
    <location>
        <position position="799"/>
    </location>
</feature>
<feature type="modified residue" description="Phosphoserine" evidence="2">
    <location>
        <position position="804"/>
    </location>
</feature>
<feature type="sequence variant" id="VAR_060341" description="In dbSNP:rs2401751." evidence="9">
    <original>L</original>
    <variation>F</variation>
    <location>
        <position position="385"/>
    </location>
</feature>
<feature type="sequence variant" id="VAR_055539" description="In dbSNP:rs12879993.">
    <original>K</original>
    <variation>N</variation>
    <location>
        <position position="906"/>
    </location>
</feature>
<feature type="sequence variant" id="VAR_060342" description="In dbSNP:rs2274736." evidence="9">
    <original>V</original>
    <variation>A</variation>
    <location>
        <position position="936"/>
    </location>
</feature>
<feature type="strand" evidence="12">
    <location>
        <begin position="25"/>
        <end position="28"/>
    </location>
</feature>
<feature type="strand" evidence="12">
    <location>
        <begin position="34"/>
        <end position="37"/>
    </location>
</feature>
<feature type="helix" evidence="12">
    <location>
        <begin position="45"/>
        <end position="55"/>
    </location>
</feature>
<feature type="helix" evidence="15">
    <location>
        <begin position="61"/>
        <end position="63"/>
    </location>
</feature>
<feature type="strand" evidence="12">
    <location>
        <begin position="64"/>
        <end position="70"/>
    </location>
</feature>
<feature type="strand" evidence="12">
    <location>
        <begin position="75"/>
        <end position="77"/>
    </location>
</feature>
<feature type="helix" evidence="12">
    <location>
        <begin position="84"/>
        <end position="91"/>
    </location>
</feature>
<feature type="strand" evidence="12">
    <location>
        <begin position="92"/>
        <end position="103"/>
    </location>
</feature>
<feature type="helix" evidence="12">
    <location>
        <begin position="108"/>
        <end position="110"/>
    </location>
</feature>
<feature type="helix" evidence="12">
    <location>
        <begin position="114"/>
        <end position="129"/>
    </location>
</feature>
<feature type="helix" evidence="12">
    <location>
        <begin position="137"/>
        <end position="152"/>
    </location>
</feature>
<feature type="helix" evidence="12">
    <location>
        <begin position="157"/>
        <end position="166"/>
    </location>
</feature>
<feature type="turn" evidence="12">
    <location>
        <begin position="172"/>
        <end position="174"/>
    </location>
</feature>
<feature type="helix" evidence="12">
    <location>
        <begin position="178"/>
        <end position="194"/>
    </location>
</feature>
<feature type="turn" evidence="12">
    <location>
        <begin position="195"/>
        <end position="197"/>
    </location>
</feature>
<feature type="helix" evidence="12">
    <location>
        <begin position="200"/>
        <end position="211"/>
    </location>
</feature>
<feature type="turn" evidence="12">
    <location>
        <begin position="215"/>
        <end position="218"/>
    </location>
</feature>
<feature type="strand" evidence="12">
    <location>
        <begin position="220"/>
        <end position="225"/>
    </location>
</feature>
<feature type="strand" evidence="12">
    <location>
        <begin position="231"/>
        <end position="236"/>
    </location>
</feature>
<feature type="strand" evidence="12">
    <location>
        <begin position="238"/>
        <end position="245"/>
    </location>
</feature>
<feature type="strand" evidence="12">
    <location>
        <begin position="252"/>
        <end position="255"/>
    </location>
</feature>
<feature type="helix" evidence="12">
    <location>
        <begin position="256"/>
        <end position="258"/>
    </location>
</feature>
<feature type="strand" evidence="12">
    <location>
        <begin position="259"/>
        <end position="265"/>
    </location>
</feature>
<feature type="strand" evidence="12">
    <location>
        <begin position="268"/>
        <end position="273"/>
    </location>
</feature>
<feature type="strand" evidence="12">
    <location>
        <begin position="280"/>
        <end position="283"/>
    </location>
</feature>
<feature type="helix" evidence="12">
    <location>
        <begin position="287"/>
        <end position="307"/>
    </location>
</feature>
<feature type="helix" evidence="13">
    <location>
        <begin position="880"/>
        <end position="892"/>
    </location>
</feature>
<feature type="helix" evidence="13">
    <location>
        <begin position="896"/>
        <end position="901"/>
    </location>
</feature>
<feature type="strand" evidence="13">
    <location>
        <begin position="908"/>
        <end position="910"/>
    </location>
</feature>
<feature type="turn" evidence="13">
    <location>
        <begin position="914"/>
        <end position="917"/>
    </location>
</feature>
<feature type="helix" evidence="13">
    <location>
        <begin position="919"/>
        <end position="924"/>
    </location>
</feature>
<feature type="turn" evidence="13">
    <location>
        <begin position="934"/>
        <end position="936"/>
    </location>
</feature>
<feature type="strand" evidence="15">
    <location>
        <begin position="937"/>
        <end position="939"/>
    </location>
</feature>
<feature type="strand" evidence="14">
    <location>
        <begin position="944"/>
        <end position="946"/>
    </location>
</feature>
<feature type="strand" evidence="13">
    <location>
        <begin position="952"/>
        <end position="960"/>
    </location>
</feature>
<feature type="strand" evidence="13">
    <location>
        <begin position="963"/>
        <end position="970"/>
    </location>
</feature>
<feature type="helix" evidence="13">
    <location>
        <begin position="975"/>
        <end position="977"/>
    </location>
</feature>
<feature type="helix" evidence="13">
    <location>
        <begin position="978"/>
        <end position="987"/>
    </location>
</feature>
<feature type="strand" evidence="13">
    <location>
        <begin position="992"/>
        <end position="995"/>
    </location>
</feature>
<feature type="strand" evidence="13">
    <location>
        <begin position="999"/>
        <end position="1001"/>
    </location>
</feature>
<feature type="strand" evidence="13">
    <location>
        <begin position="1004"/>
        <end position="1007"/>
    </location>
</feature>
<feature type="strand" evidence="13">
    <location>
        <begin position="1020"/>
        <end position="1023"/>
    </location>
</feature>
<feature type="strand" evidence="13">
    <location>
        <begin position="1026"/>
        <end position="1035"/>
    </location>
</feature>
<feature type="strand" evidence="13">
    <location>
        <begin position="1037"/>
        <end position="1048"/>
    </location>
</feature>
<feature type="turn" evidence="13">
    <location>
        <begin position="1049"/>
        <end position="1051"/>
    </location>
</feature>
<feature type="strand" evidence="13">
    <location>
        <begin position="1054"/>
        <end position="1062"/>
    </location>
</feature>
<feature type="strand" evidence="14">
    <location>
        <begin position="1067"/>
        <end position="1069"/>
    </location>
</feature>
<feature type="helix" evidence="13">
    <location>
        <begin position="1074"/>
        <end position="1093"/>
    </location>
</feature>
<feature type="strand" evidence="13">
    <location>
        <begin position="1104"/>
        <end position="1107"/>
    </location>
</feature>
<feature type="strand" evidence="13">
    <location>
        <begin position="1109"/>
        <end position="1112"/>
    </location>
</feature>
<feature type="helix" evidence="13">
    <location>
        <begin position="1113"/>
        <end position="1127"/>
    </location>
</feature>
<feature type="helix" evidence="13">
    <location>
        <begin position="1136"/>
        <end position="1144"/>
    </location>
</feature>
<feature type="helix" evidence="13">
    <location>
        <begin position="1154"/>
        <end position="1169"/>
    </location>
</feature>
<organism>
    <name type="scientific">Homo sapiens</name>
    <name type="common">Human</name>
    <dbReference type="NCBI Taxonomy" id="9606"/>
    <lineage>
        <taxon>Eukaryota</taxon>
        <taxon>Metazoa</taxon>
        <taxon>Chordata</taxon>
        <taxon>Craniata</taxon>
        <taxon>Vertebrata</taxon>
        <taxon>Euteleostomi</taxon>
        <taxon>Mammalia</taxon>
        <taxon>Eutheria</taxon>
        <taxon>Euarchontoglires</taxon>
        <taxon>Primates</taxon>
        <taxon>Haplorrhini</taxon>
        <taxon>Catarrhini</taxon>
        <taxon>Hominidae</taxon>
        <taxon>Homo</taxon>
    </lineage>
</organism>
<sequence length="1174" mass="133281">MPLPFGLKLKRTRRYTVSSKSCLVARIQLLNNEFVEFTLSVESTGQESLEAVAQRLELREVTYFSLWYYNKQNQRRWVDLEKPLKKQLDKYALEPTVYFGVVFYVPSVSQLQQEITRYQYYLQLKKDILEGSIPCTLEQAIQLAGLAVQADFGDFDQYESQDFLQKFALFPVGWLQDEKVLEEATQKVALLHQKYRGLTAPDAEMLYMQEVERMDGYGEESYPAKDSQGSDISIGACLEGIFVKHKNGRHPVVFRWHDIANMSHNKSFFALELANKEETIQFQTEDMETAKYIWRLCVARHKFYRLNQCNLQTQTVTVNPIRRRSSSRMSLPKPQPYVMPPPPQLHYNGHYTEPYASSQDNLFVPNQNGYYCHSQTSLDRAQIDLNGRIRNGSVYSAHSTNSLNNPQPYLQPSPMSSNPSITGSDVMRPDYLPSHRHSAVIPPSYRPTPDYETVMKQLNRGLVHAERQSHSLRNLNIGSSYAYSRPAALVYSQPEIREHAQLPSPAAAHCPFSLSYSFHSPSPYPYPAERRPVVGAVSVPELTNAQLQAQDYPSPNIMRTQVYRPPPPYPPPRPANSTPDLSRHLYISSSNPDLITRRVHHSVQTFQEDSLPVAHSLQEVSEPLTAARHAQLHKRNSIEVAGLSHGLEGLRLKERTLSASAAEVAPRAVSVGSQPSVFTERTQREGPEEAEGLRYGHKKSLSDATMLIHSSEEEEDEDFEEESGARAPPARAREPRPGLAQDPPGCPRVLLAGPLHILEPKAHVPDAEKRMMDSSPVRTTAEAQRPWRDGLLMPSMSESDLTTSGRYRARRDSLKKRPVSDLLSGKKNIVEGLPPLGGMKKTRVDAKKIGPLKLAALNGLSLSRVPLPDEGKEVATRATNDERCKILEQRLEQGMVFTEYERILKKRLVDGECSTARLPENAERNRFQDVLPYDDVRVELVPTKENNTGYINASHIKVSVSGIEWDYIATQGPLQNTCQDFWQMVWEQGIAIIAMVTAEEEGGREKSFRYWPRLGSRHNTVTYGRFKITTRFRTDSGCYATTGLKMKHLLTGQERTVWHLQYTDWPEHGCPEDLKGFLSYLEEIQSVRRHTNSTSDPQSPNPPLLVHCSAGVGRTGVVILSEIMIACLEHNEVLDIPRVLDMLRQQRMMLVQTLCQYTFVYRVLIQFLKSSRLI</sequence>
<dbReference type="EC" id="3.1.3.48"/>
<dbReference type="EMBL" id="X79510">
    <property type="protein sequence ID" value="CAA56042.1"/>
    <property type="molecule type" value="mRNA"/>
</dbReference>
<dbReference type="EMBL" id="AL162171">
    <property type="status" value="NOT_ANNOTATED_CDS"/>
    <property type="molecule type" value="Genomic_DNA"/>
</dbReference>
<dbReference type="CCDS" id="CCDS9884.1"/>
<dbReference type="PIR" id="I38140">
    <property type="entry name" value="I38140"/>
</dbReference>
<dbReference type="RefSeq" id="NP_008970.2">
    <property type="nucleotide sequence ID" value="NM_007039.4"/>
</dbReference>
<dbReference type="RefSeq" id="XP_005267344.1">
    <property type="nucleotide sequence ID" value="XM_005267287.4"/>
</dbReference>
<dbReference type="RefSeq" id="XP_011534669.1">
    <property type="nucleotide sequence ID" value="XM_011536367.4"/>
</dbReference>
<dbReference type="RefSeq" id="XP_054231261.1">
    <property type="nucleotide sequence ID" value="XM_054375286.1"/>
</dbReference>
<dbReference type="RefSeq" id="XP_054231262.1">
    <property type="nucleotide sequence ID" value="XM_054375287.1"/>
</dbReference>
<dbReference type="PDB" id="8GVL">
    <property type="method" value="X-ray"/>
    <property type="resolution" value="2.10 A"/>
    <property type="chains" value="A/B=18-318"/>
</dbReference>
<dbReference type="PDB" id="8GVV">
    <property type="method" value="X-ray"/>
    <property type="resolution" value="1.80 A"/>
    <property type="chains" value="A=876-1174"/>
</dbReference>
<dbReference type="PDB" id="8GWH">
    <property type="method" value="X-ray"/>
    <property type="resolution" value="2.00 A"/>
    <property type="chains" value="A=876-1174"/>
</dbReference>
<dbReference type="PDB" id="8GXE">
    <property type="method" value="X-ray"/>
    <property type="resolution" value="3.00 A"/>
    <property type="chains" value="A=878-1174, B=18-308"/>
</dbReference>
<dbReference type="PDB" id="8Y8Y">
    <property type="method" value="X-ray"/>
    <property type="resolution" value="2.10 A"/>
    <property type="chains" value="A=19-308"/>
</dbReference>
<dbReference type="PDBsum" id="8GVL"/>
<dbReference type="PDBsum" id="8GVV"/>
<dbReference type="PDBsum" id="8GWH"/>
<dbReference type="PDBsum" id="8GXE"/>
<dbReference type="PDBsum" id="8Y8Y"/>
<dbReference type="SMR" id="Q16825"/>
<dbReference type="BioGRID" id="116280">
    <property type="interactions" value="94"/>
</dbReference>
<dbReference type="FunCoup" id="Q16825">
    <property type="interactions" value="890"/>
</dbReference>
<dbReference type="IntAct" id="Q16825">
    <property type="interactions" value="46"/>
</dbReference>
<dbReference type="MINT" id="Q16825"/>
<dbReference type="STRING" id="9606.ENSP00000452414"/>
<dbReference type="BindingDB" id="Q16825"/>
<dbReference type="DEPOD" id="PTPN21"/>
<dbReference type="iPTMnet" id="Q16825"/>
<dbReference type="PhosphoSitePlus" id="Q16825"/>
<dbReference type="BioMuta" id="PTPN21"/>
<dbReference type="DMDM" id="290457654"/>
<dbReference type="jPOST" id="Q16825"/>
<dbReference type="MassIVE" id="Q16825"/>
<dbReference type="PaxDb" id="9606-ENSP00000452414"/>
<dbReference type="PeptideAtlas" id="Q16825"/>
<dbReference type="ProteomicsDB" id="61084"/>
<dbReference type="Antibodypedia" id="26302">
    <property type="antibodies" value="135 antibodies from 29 providers"/>
</dbReference>
<dbReference type="DNASU" id="11099"/>
<dbReference type="Ensembl" id="ENST00000328736.7">
    <property type="protein sequence ID" value="ENSP00000330276.3"/>
    <property type="gene ID" value="ENSG00000070778.13"/>
</dbReference>
<dbReference type="Ensembl" id="ENST00000556564.6">
    <property type="protein sequence ID" value="ENSP00000452414.1"/>
    <property type="gene ID" value="ENSG00000070778.13"/>
</dbReference>
<dbReference type="GeneID" id="11099"/>
<dbReference type="KEGG" id="hsa:11099"/>
<dbReference type="MANE-Select" id="ENST00000556564.6">
    <property type="protein sequence ID" value="ENSP00000452414.1"/>
    <property type="RefSeq nucleotide sequence ID" value="NM_007039.4"/>
    <property type="RefSeq protein sequence ID" value="NP_008970.2"/>
</dbReference>
<dbReference type="UCSC" id="uc001xwv.5">
    <property type="organism name" value="human"/>
</dbReference>
<dbReference type="AGR" id="HGNC:9651"/>
<dbReference type="CTD" id="11099"/>
<dbReference type="DisGeNET" id="11099"/>
<dbReference type="GeneCards" id="PTPN21"/>
<dbReference type="HGNC" id="HGNC:9651">
    <property type="gene designation" value="PTPN21"/>
</dbReference>
<dbReference type="HPA" id="ENSG00000070778">
    <property type="expression patterns" value="Low tissue specificity"/>
</dbReference>
<dbReference type="MalaCards" id="PTPN21"/>
<dbReference type="MIM" id="603271">
    <property type="type" value="gene"/>
</dbReference>
<dbReference type="neXtProt" id="NX_Q16825"/>
<dbReference type="OpenTargets" id="ENSG00000070778"/>
<dbReference type="PharmGKB" id="PA33994"/>
<dbReference type="VEuPathDB" id="HostDB:ENSG00000070778"/>
<dbReference type="eggNOG" id="KOG0792">
    <property type="taxonomic scope" value="Eukaryota"/>
</dbReference>
<dbReference type="GeneTree" id="ENSGT00940000155613"/>
<dbReference type="HOGENOM" id="CLU_006456_1_0_1"/>
<dbReference type="InParanoid" id="Q16825"/>
<dbReference type="OMA" id="TEWDYIA"/>
<dbReference type="OrthoDB" id="10012364at2759"/>
<dbReference type="PAN-GO" id="Q16825">
    <property type="GO annotations" value="2 GO annotations based on evolutionary models"/>
</dbReference>
<dbReference type="PhylomeDB" id="Q16825"/>
<dbReference type="TreeFam" id="TF315900"/>
<dbReference type="BRENDA" id="3.1.3.48">
    <property type="organism ID" value="2681"/>
</dbReference>
<dbReference type="PathwayCommons" id="Q16825"/>
<dbReference type="SignaLink" id="Q16825"/>
<dbReference type="SIGNOR" id="Q16825"/>
<dbReference type="BioGRID-ORCS" id="11099">
    <property type="hits" value="15 hits in 1163 CRISPR screens"/>
</dbReference>
<dbReference type="ChiTaRS" id="PTPN21">
    <property type="organism name" value="human"/>
</dbReference>
<dbReference type="GeneWiki" id="PTPN21"/>
<dbReference type="GenomeRNAi" id="11099"/>
<dbReference type="Pharos" id="Q16825">
    <property type="development level" value="Tbio"/>
</dbReference>
<dbReference type="PRO" id="PR:Q16825"/>
<dbReference type="Proteomes" id="UP000005640">
    <property type="component" value="Chromosome 14"/>
</dbReference>
<dbReference type="RNAct" id="Q16825">
    <property type="molecule type" value="protein"/>
</dbReference>
<dbReference type="Bgee" id="ENSG00000070778">
    <property type="expression patterns" value="Expressed in upper leg skin and 171 other cell types or tissues"/>
</dbReference>
<dbReference type="ExpressionAtlas" id="Q16825">
    <property type="expression patterns" value="baseline and differential"/>
</dbReference>
<dbReference type="GO" id="GO:0005737">
    <property type="term" value="C:cytoplasm"/>
    <property type="evidence" value="ECO:0000318"/>
    <property type="project" value="GO_Central"/>
</dbReference>
<dbReference type="GO" id="GO:0005856">
    <property type="term" value="C:cytoskeleton"/>
    <property type="evidence" value="ECO:0000304"/>
    <property type="project" value="ProtInc"/>
</dbReference>
<dbReference type="GO" id="GO:0004725">
    <property type="term" value="F:protein tyrosine phosphatase activity"/>
    <property type="evidence" value="ECO:0000318"/>
    <property type="project" value="GO_Central"/>
</dbReference>
<dbReference type="GO" id="GO:0006470">
    <property type="term" value="P:protein dephosphorylation"/>
    <property type="evidence" value="ECO:0000304"/>
    <property type="project" value="ProtInc"/>
</dbReference>
<dbReference type="CDD" id="cd14473">
    <property type="entry name" value="FERM_B-lobe"/>
    <property type="match status" value="1"/>
</dbReference>
<dbReference type="CDD" id="cd13188">
    <property type="entry name" value="FERM_C_PTPN14_PTPN21"/>
    <property type="match status" value="1"/>
</dbReference>
<dbReference type="CDD" id="cd17192">
    <property type="entry name" value="FERM_F1_PTPN21"/>
    <property type="match status" value="1"/>
</dbReference>
<dbReference type="FunFam" id="1.20.80.10:FF:000014">
    <property type="entry name" value="Tyrosine-protein phosphatase non-receptor type"/>
    <property type="match status" value="1"/>
</dbReference>
<dbReference type="FunFam" id="2.30.29.30:FF:000149">
    <property type="entry name" value="Tyrosine-protein phosphatase non-receptor type"/>
    <property type="match status" value="1"/>
</dbReference>
<dbReference type="FunFam" id="3.10.20.90:FF:000039">
    <property type="entry name" value="Tyrosine-protein phosphatase non-receptor type"/>
    <property type="match status" value="1"/>
</dbReference>
<dbReference type="FunFam" id="3.90.190.10:FF:000030">
    <property type="entry name" value="Tyrosine-protein phosphatase non-receptor type"/>
    <property type="match status" value="1"/>
</dbReference>
<dbReference type="Gene3D" id="1.20.80.10">
    <property type="match status" value="1"/>
</dbReference>
<dbReference type="Gene3D" id="3.10.20.90">
    <property type="entry name" value="Phosphatidylinositol 3-kinase Catalytic Subunit, Chain A, domain 1"/>
    <property type="match status" value="1"/>
</dbReference>
<dbReference type="Gene3D" id="2.30.29.30">
    <property type="entry name" value="Pleckstrin-homology domain (PH domain)/Phosphotyrosine-binding domain (PTB)"/>
    <property type="match status" value="1"/>
</dbReference>
<dbReference type="Gene3D" id="3.90.190.10">
    <property type="entry name" value="Protein tyrosine phosphatase superfamily"/>
    <property type="match status" value="1"/>
</dbReference>
<dbReference type="InterPro" id="IPR019749">
    <property type="entry name" value="Band_41_domain"/>
</dbReference>
<dbReference type="InterPro" id="IPR014352">
    <property type="entry name" value="FERM/acyl-CoA-bd_prot_sf"/>
</dbReference>
<dbReference type="InterPro" id="IPR035963">
    <property type="entry name" value="FERM_2"/>
</dbReference>
<dbReference type="InterPro" id="IPR019748">
    <property type="entry name" value="FERM_central"/>
</dbReference>
<dbReference type="InterPro" id="IPR019747">
    <property type="entry name" value="FERM_CS"/>
</dbReference>
<dbReference type="InterPro" id="IPR000299">
    <property type="entry name" value="FERM_domain"/>
</dbReference>
<dbReference type="InterPro" id="IPR018979">
    <property type="entry name" value="FERM_N"/>
</dbReference>
<dbReference type="InterPro" id="IPR018980">
    <property type="entry name" value="FERM_PH-like_C"/>
</dbReference>
<dbReference type="InterPro" id="IPR011993">
    <property type="entry name" value="PH-like_dom_sf"/>
</dbReference>
<dbReference type="InterPro" id="IPR029021">
    <property type="entry name" value="Prot-tyrosine_phosphatase-like"/>
</dbReference>
<dbReference type="InterPro" id="IPR000242">
    <property type="entry name" value="PTP_cat"/>
</dbReference>
<dbReference type="InterPro" id="IPR014392">
    <property type="entry name" value="PTP_non-rcpt_14/21"/>
</dbReference>
<dbReference type="InterPro" id="IPR041782">
    <property type="entry name" value="PTPN14/21_FERM_C"/>
</dbReference>
<dbReference type="InterPro" id="IPR016130">
    <property type="entry name" value="Tyr_Pase_AS"/>
</dbReference>
<dbReference type="InterPro" id="IPR003595">
    <property type="entry name" value="Tyr_Pase_cat"/>
</dbReference>
<dbReference type="InterPro" id="IPR000387">
    <property type="entry name" value="Tyr_Pase_dom"/>
</dbReference>
<dbReference type="InterPro" id="IPR029071">
    <property type="entry name" value="Ubiquitin-like_domsf"/>
</dbReference>
<dbReference type="PANTHER" id="PTHR45706">
    <property type="entry name" value="TYROSINE-PROTEIN PHOSPHATASE"/>
    <property type="match status" value="1"/>
</dbReference>
<dbReference type="PANTHER" id="PTHR45706:SF3">
    <property type="entry name" value="TYROSINE-PROTEIN PHOSPHATASE NON-RECEPTOR TYPE 21"/>
    <property type="match status" value="1"/>
</dbReference>
<dbReference type="Pfam" id="PF09380">
    <property type="entry name" value="FERM_C"/>
    <property type="match status" value="1"/>
</dbReference>
<dbReference type="Pfam" id="PF00373">
    <property type="entry name" value="FERM_M"/>
    <property type="match status" value="1"/>
</dbReference>
<dbReference type="Pfam" id="PF09379">
    <property type="entry name" value="FERM_N"/>
    <property type="match status" value="1"/>
</dbReference>
<dbReference type="Pfam" id="PF00102">
    <property type="entry name" value="Y_phosphatase"/>
    <property type="match status" value="1"/>
</dbReference>
<dbReference type="PIRSF" id="PIRSF000934">
    <property type="entry name" value="Tyr-Ptase_nr14"/>
    <property type="match status" value="1"/>
</dbReference>
<dbReference type="PRINTS" id="PR00935">
    <property type="entry name" value="BAND41"/>
</dbReference>
<dbReference type="PRINTS" id="PR00700">
    <property type="entry name" value="PRTYPHPHTASE"/>
</dbReference>
<dbReference type="SMART" id="SM00295">
    <property type="entry name" value="B41"/>
    <property type="match status" value="1"/>
</dbReference>
<dbReference type="SMART" id="SM01196">
    <property type="entry name" value="FERM_C"/>
    <property type="match status" value="1"/>
</dbReference>
<dbReference type="SMART" id="SM00194">
    <property type="entry name" value="PTPc"/>
    <property type="match status" value="1"/>
</dbReference>
<dbReference type="SMART" id="SM00404">
    <property type="entry name" value="PTPc_motif"/>
    <property type="match status" value="1"/>
</dbReference>
<dbReference type="SUPFAM" id="SSF52799">
    <property type="entry name" value="(Phosphotyrosine protein) phosphatases II"/>
    <property type="match status" value="1"/>
</dbReference>
<dbReference type="SUPFAM" id="SSF50729">
    <property type="entry name" value="PH domain-like"/>
    <property type="match status" value="1"/>
</dbReference>
<dbReference type="SUPFAM" id="SSF47031">
    <property type="entry name" value="Second domain of FERM"/>
    <property type="match status" value="1"/>
</dbReference>
<dbReference type="SUPFAM" id="SSF54236">
    <property type="entry name" value="Ubiquitin-like"/>
    <property type="match status" value="1"/>
</dbReference>
<dbReference type="PROSITE" id="PS00660">
    <property type="entry name" value="FERM_1"/>
    <property type="match status" value="1"/>
</dbReference>
<dbReference type="PROSITE" id="PS00661">
    <property type="entry name" value="FERM_2"/>
    <property type="match status" value="1"/>
</dbReference>
<dbReference type="PROSITE" id="PS50057">
    <property type="entry name" value="FERM_3"/>
    <property type="match status" value="1"/>
</dbReference>
<dbReference type="PROSITE" id="PS00383">
    <property type="entry name" value="TYR_PHOSPHATASE_1"/>
    <property type="match status" value="1"/>
</dbReference>
<dbReference type="PROSITE" id="PS50056">
    <property type="entry name" value="TYR_PHOSPHATASE_2"/>
    <property type="match status" value="1"/>
</dbReference>
<dbReference type="PROSITE" id="PS50055">
    <property type="entry name" value="TYR_PHOSPHATASE_PTP"/>
    <property type="match status" value="1"/>
</dbReference>
<evidence type="ECO:0000250" key="1"/>
<evidence type="ECO:0000250" key="2">
    <source>
        <dbReference type="UniProtKB" id="Q62136"/>
    </source>
</evidence>
<evidence type="ECO:0000250" key="3">
    <source>
        <dbReference type="UniProtKB" id="Q62728"/>
    </source>
</evidence>
<evidence type="ECO:0000255" key="4"/>
<evidence type="ECO:0000255" key="5">
    <source>
        <dbReference type="PROSITE-ProRule" id="PRU00084"/>
    </source>
</evidence>
<evidence type="ECO:0000255" key="6">
    <source>
        <dbReference type="PROSITE-ProRule" id="PRU00160"/>
    </source>
</evidence>
<evidence type="ECO:0000255" key="7">
    <source>
        <dbReference type="PROSITE-ProRule" id="PRU10044"/>
    </source>
</evidence>
<evidence type="ECO:0000256" key="8">
    <source>
        <dbReference type="SAM" id="MobiDB-lite"/>
    </source>
</evidence>
<evidence type="ECO:0000269" key="9">
    <source>
    </source>
</evidence>
<evidence type="ECO:0000305" key="10"/>
<evidence type="ECO:0007744" key="11">
    <source>
    </source>
</evidence>
<evidence type="ECO:0007829" key="12">
    <source>
        <dbReference type="PDB" id="8GVL"/>
    </source>
</evidence>
<evidence type="ECO:0007829" key="13">
    <source>
        <dbReference type="PDB" id="8GVV"/>
    </source>
</evidence>
<evidence type="ECO:0007829" key="14">
    <source>
        <dbReference type="PDB" id="8GWH"/>
    </source>
</evidence>
<evidence type="ECO:0007829" key="15">
    <source>
        <dbReference type="PDB" id="8GXE"/>
    </source>
</evidence>
<accession>Q16825</accession>
<reference key="1">
    <citation type="journal article" date="1994" name="Proc. Natl. Acad. Sci. U.S.A.">
        <title>Src kinase associates with a member of a distinct subfamily of protein-tyrosine phosphatases containing an ezrin-like domain.</title>
        <authorList>
            <person name="Moeller N.P.H."/>
            <person name="Moeller K.B."/>
            <person name="Lammers R."/>
            <person name="Kharitonenkov A."/>
            <person name="Sures I."/>
            <person name="Ullrich A."/>
        </authorList>
    </citation>
    <scope>NUCLEOTIDE SEQUENCE [MRNA]</scope>
    <scope>VARIANTS PHE-385 AND ALA-936</scope>
    <source>
        <tissue>Skeletal muscle</tissue>
    </source>
</reference>
<reference key="2">
    <citation type="journal article" date="2003" name="Nature">
        <title>The DNA sequence and analysis of human chromosome 14.</title>
        <authorList>
            <person name="Heilig R."/>
            <person name="Eckenberg R."/>
            <person name="Petit J.-L."/>
            <person name="Fonknechten N."/>
            <person name="Da Silva C."/>
            <person name="Cattolico L."/>
            <person name="Levy M."/>
            <person name="Barbe V."/>
            <person name="De Berardinis V."/>
            <person name="Ureta-Vidal A."/>
            <person name="Pelletier E."/>
            <person name="Vico V."/>
            <person name="Anthouard V."/>
            <person name="Rowen L."/>
            <person name="Madan A."/>
            <person name="Qin S."/>
            <person name="Sun H."/>
            <person name="Du H."/>
            <person name="Pepin K."/>
            <person name="Artiguenave F."/>
            <person name="Robert C."/>
            <person name="Cruaud C."/>
            <person name="Bruels T."/>
            <person name="Jaillon O."/>
            <person name="Friedlander L."/>
            <person name="Samson G."/>
            <person name="Brottier P."/>
            <person name="Cure S."/>
            <person name="Segurens B."/>
            <person name="Aniere F."/>
            <person name="Samain S."/>
            <person name="Crespeau H."/>
            <person name="Abbasi N."/>
            <person name="Aiach N."/>
            <person name="Boscus D."/>
            <person name="Dickhoff R."/>
            <person name="Dors M."/>
            <person name="Dubois I."/>
            <person name="Friedman C."/>
            <person name="Gouyvenoux M."/>
            <person name="James R."/>
            <person name="Madan A."/>
            <person name="Mairey-Estrada B."/>
            <person name="Mangenot S."/>
            <person name="Martins N."/>
            <person name="Menard M."/>
            <person name="Oztas S."/>
            <person name="Ratcliffe A."/>
            <person name="Shaffer T."/>
            <person name="Trask B."/>
            <person name="Vacherie B."/>
            <person name="Bellemere C."/>
            <person name="Belser C."/>
            <person name="Besnard-Gonnet M."/>
            <person name="Bartol-Mavel D."/>
            <person name="Boutard M."/>
            <person name="Briez-Silla S."/>
            <person name="Combette S."/>
            <person name="Dufosse-Laurent V."/>
            <person name="Ferron C."/>
            <person name="Lechaplais C."/>
            <person name="Louesse C."/>
            <person name="Muselet D."/>
            <person name="Magdelenat G."/>
            <person name="Pateau E."/>
            <person name="Petit E."/>
            <person name="Sirvain-Trukniewicz P."/>
            <person name="Trybou A."/>
            <person name="Vega-Czarny N."/>
            <person name="Bataille E."/>
            <person name="Bluet E."/>
            <person name="Bordelais I."/>
            <person name="Dubois M."/>
            <person name="Dumont C."/>
            <person name="Guerin T."/>
            <person name="Haffray S."/>
            <person name="Hammadi R."/>
            <person name="Muanga J."/>
            <person name="Pellouin V."/>
            <person name="Robert D."/>
            <person name="Wunderle E."/>
            <person name="Gauguet G."/>
            <person name="Roy A."/>
            <person name="Sainte-Marthe L."/>
            <person name="Verdier J."/>
            <person name="Verdier-Discala C."/>
            <person name="Hillier L.W."/>
            <person name="Fulton L."/>
            <person name="McPherson J."/>
            <person name="Matsuda F."/>
            <person name="Wilson R."/>
            <person name="Scarpelli C."/>
            <person name="Gyapay G."/>
            <person name="Wincker P."/>
            <person name="Saurin W."/>
            <person name="Quetier F."/>
            <person name="Waterston R."/>
            <person name="Hood L."/>
            <person name="Weissenbach J."/>
        </authorList>
    </citation>
    <scope>NUCLEOTIDE SEQUENCE [LARGE SCALE GENOMIC DNA]</scope>
</reference>
<reference key="3">
    <citation type="journal article" date="2011" name="Sci. Signal.">
        <title>System-wide temporal characterization of the proteome and phosphoproteome of human embryonic stem cell differentiation.</title>
        <authorList>
            <person name="Rigbolt K.T."/>
            <person name="Prokhorova T.A."/>
            <person name="Akimov V."/>
            <person name="Henningsen J."/>
            <person name="Johansen P.T."/>
            <person name="Kratchmarova I."/>
            <person name="Kassem M."/>
            <person name="Mann M."/>
            <person name="Olsen J.V."/>
            <person name="Blagoev B."/>
        </authorList>
    </citation>
    <scope>PHOSPHORYLATION [LARGE SCALE ANALYSIS] AT SER-637</scope>
    <scope>IDENTIFICATION BY MASS SPECTROMETRY [LARGE SCALE ANALYSIS]</scope>
</reference>
<reference key="4">
    <citation type="journal article" date="2013" name="J. Proteome Res.">
        <title>Toward a comprehensive characterization of a human cancer cell phosphoproteome.</title>
        <authorList>
            <person name="Zhou H."/>
            <person name="Di Palma S."/>
            <person name="Preisinger C."/>
            <person name="Peng M."/>
            <person name="Polat A.N."/>
            <person name="Heck A.J."/>
            <person name="Mohammed S."/>
        </authorList>
    </citation>
    <scope>IDENTIFICATION BY MASS SPECTROMETRY [LARGE SCALE ANALYSIS]</scope>
    <source>
        <tissue>Erythroleukemia</tissue>
    </source>
</reference>
<reference key="5">
    <citation type="journal article" date="2014" name="J. Proteomics">
        <title>An enzyme assisted RP-RPLC approach for in-depth analysis of human liver phosphoproteome.</title>
        <authorList>
            <person name="Bian Y."/>
            <person name="Song C."/>
            <person name="Cheng K."/>
            <person name="Dong M."/>
            <person name="Wang F."/>
            <person name="Huang J."/>
            <person name="Sun D."/>
            <person name="Wang L."/>
            <person name="Ye M."/>
            <person name="Zou H."/>
        </authorList>
    </citation>
    <scope>IDENTIFICATION BY MASS SPECTROMETRY [LARGE SCALE ANALYSIS]</scope>
    <source>
        <tissue>Liver</tissue>
    </source>
</reference>